<feature type="chain" id="PRO_1000012516" description="UPF0122 protein BCE_3888">
    <location>
        <begin position="1"/>
        <end position="110"/>
    </location>
</feature>
<name>Y3888_BACC1</name>
<comment type="function">
    <text evidence="1">Might take part in the signal recognition particle (SRP) pathway. This is inferred from the conservation of its genetic proximity to ftsY/ffh. May be a regulatory protein.</text>
</comment>
<comment type="similarity">
    <text evidence="1">Belongs to the UPF0122 family.</text>
</comment>
<sequence>MLEKTTRMNYLFDFYQSLLTQKQRSYMSLYYLDDLSLGEIAEEFDVSRQAVYDNIKRTEAMLEEYEEKLVLLQKFQERQRLVAKLKQLISEEEHVNEEMKQVVEAIEKLD</sequence>
<reference key="1">
    <citation type="journal article" date="2004" name="Nucleic Acids Res.">
        <title>The genome sequence of Bacillus cereus ATCC 10987 reveals metabolic adaptations and a large plasmid related to Bacillus anthracis pXO1.</title>
        <authorList>
            <person name="Rasko D.A."/>
            <person name="Ravel J."/>
            <person name="Oekstad O.A."/>
            <person name="Helgason E."/>
            <person name="Cer R.Z."/>
            <person name="Jiang L."/>
            <person name="Shores K.A."/>
            <person name="Fouts D.E."/>
            <person name="Tourasse N.J."/>
            <person name="Angiuoli S.V."/>
            <person name="Kolonay J.F."/>
            <person name="Nelson W.C."/>
            <person name="Kolstoe A.-B."/>
            <person name="Fraser C.M."/>
            <person name="Read T.D."/>
        </authorList>
    </citation>
    <scope>NUCLEOTIDE SEQUENCE [LARGE SCALE GENOMIC DNA]</scope>
    <source>
        <strain>ATCC 10987 / NRS 248</strain>
    </source>
</reference>
<evidence type="ECO:0000255" key="1">
    <source>
        <dbReference type="HAMAP-Rule" id="MF_00245"/>
    </source>
</evidence>
<accession>Q732M4</accession>
<protein>
    <recommendedName>
        <fullName evidence="1">UPF0122 protein BCE_3888</fullName>
    </recommendedName>
</protein>
<dbReference type="EMBL" id="AE017194">
    <property type="protein sequence ID" value="AAS42793.1"/>
    <property type="molecule type" value="Genomic_DNA"/>
</dbReference>
<dbReference type="SMR" id="Q732M4"/>
<dbReference type="KEGG" id="bca:BCE_3888"/>
<dbReference type="HOGENOM" id="CLU_129218_1_0_9"/>
<dbReference type="Proteomes" id="UP000002527">
    <property type="component" value="Chromosome"/>
</dbReference>
<dbReference type="Gene3D" id="1.10.10.10">
    <property type="entry name" value="Winged helix-like DNA-binding domain superfamily/Winged helix DNA-binding domain"/>
    <property type="match status" value="1"/>
</dbReference>
<dbReference type="HAMAP" id="MF_00245">
    <property type="entry name" value="UPF0122"/>
    <property type="match status" value="1"/>
</dbReference>
<dbReference type="InterPro" id="IPR013324">
    <property type="entry name" value="RNA_pol_sigma_r3/r4-like"/>
</dbReference>
<dbReference type="InterPro" id="IPR007394">
    <property type="entry name" value="UPF0122"/>
</dbReference>
<dbReference type="InterPro" id="IPR054831">
    <property type="entry name" value="UPF0122_fam_protein"/>
</dbReference>
<dbReference type="InterPro" id="IPR036388">
    <property type="entry name" value="WH-like_DNA-bd_sf"/>
</dbReference>
<dbReference type="NCBIfam" id="NF001068">
    <property type="entry name" value="PRK00118.1-4"/>
    <property type="match status" value="1"/>
</dbReference>
<dbReference type="NCBIfam" id="NF001070">
    <property type="entry name" value="PRK00118.1-6"/>
    <property type="match status" value="1"/>
</dbReference>
<dbReference type="NCBIfam" id="NF045758">
    <property type="entry name" value="YlxM"/>
    <property type="match status" value="1"/>
</dbReference>
<dbReference type="PANTHER" id="PTHR40083">
    <property type="entry name" value="UPF0122 PROTEIN CBO2450/CLC_2298"/>
    <property type="match status" value="1"/>
</dbReference>
<dbReference type="PANTHER" id="PTHR40083:SF1">
    <property type="entry name" value="UPF0122 PROTEIN YLXM"/>
    <property type="match status" value="1"/>
</dbReference>
<dbReference type="Pfam" id="PF04297">
    <property type="entry name" value="UPF0122"/>
    <property type="match status" value="1"/>
</dbReference>
<dbReference type="SUPFAM" id="SSF88659">
    <property type="entry name" value="Sigma3 and sigma4 domains of RNA polymerase sigma factors"/>
    <property type="match status" value="1"/>
</dbReference>
<organism>
    <name type="scientific">Bacillus cereus (strain ATCC 10987 / NRS 248)</name>
    <dbReference type="NCBI Taxonomy" id="222523"/>
    <lineage>
        <taxon>Bacteria</taxon>
        <taxon>Bacillati</taxon>
        <taxon>Bacillota</taxon>
        <taxon>Bacilli</taxon>
        <taxon>Bacillales</taxon>
        <taxon>Bacillaceae</taxon>
        <taxon>Bacillus</taxon>
        <taxon>Bacillus cereus group</taxon>
    </lineage>
</organism>
<proteinExistence type="inferred from homology"/>
<gene>
    <name type="ordered locus">BCE_3888</name>
</gene>